<accession>Q5SD34</accession>
<feature type="chain" id="PRO_0000216385" description="Cytochrome b6-f complex subunit 5">
    <location>
        <begin position="1"/>
        <end position="38"/>
    </location>
</feature>
<feature type="transmembrane region" description="Helical" evidence="1">
    <location>
        <begin position="5"/>
        <end position="25"/>
    </location>
</feature>
<evidence type="ECO:0000255" key="1">
    <source>
        <dbReference type="HAMAP-Rule" id="MF_00432"/>
    </source>
</evidence>
<sequence length="38" mass="4122">MVEALLSGIVLGSIPITLAGSFVTAYPQYRRGDQLDLR</sequence>
<name>PETG_HUPLU</name>
<dbReference type="EMBL" id="AY660566">
    <property type="protein sequence ID" value="AAT80706.1"/>
    <property type="molecule type" value="Genomic_DNA"/>
</dbReference>
<dbReference type="RefSeq" id="YP_209510.1">
    <property type="nucleotide sequence ID" value="NC_006861.1"/>
</dbReference>
<dbReference type="SMR" id="Q5SD34"/>
<dbReference type="GeneID" id="3283803"/>
<dbReference type="GO" id="GO:0009535">
    <property type="term" value="C:chloroplast thylakoid membrane"/>
    <property type="evidence" value="ECO:0007669"/>
    <property type="project" value="UniProtKB-SubCell"/>
</dbReference>
<dbReference type="GO" id="GO:0009512">
    <property type="term" value="C:cytochrome b6f complex"/>
    <property type="evidence" value="ECO:0007669"/>
    <property type="project" value="InterPro"/>
</dbReference>
<dbReference type="GO" id="GO:0045158">
    <property type="term" value="F:electron transporter, transferring electrons within cytochrome b6/f complex of photosystem II activity"/>
    <property type="evidence" value="ECO:0007669"/>
    <property type="project" value="UniProtKB-UniRule"/>
</dbReference>
<dbReference type="GO" id="GO:0017004">
    <property type="term" value="P:cytochrome complex assembly"/>
    <property type="evidence" value="ECO:0007669"/>
    <property type="project" value="UniProtKB-UniRule"/>
</dbReference>
<dbReference type="GO" id="GO:0015979">
    <property type="term" value="P:photosynthesis"/>
    <property type="evidence" value="ECO:0007669"/>
    <property type="project" value="UniProtKB-KW"/>
</dbReference>
<dbReference type="HAMAP" id="MF_00432">
    <property type="entry name" value="Cytb6_f_PetG"/>
    <property type="match status" value="1"/>
</dbReference>
<dbReference type="InterPro" id="IPR003683">
    <property type="entry name" value="Cyt_6/f_cplx_su5"/>
</dbReference>
<dbReference type="InterPro" id="IPR036099">
    <property type="entry name" value="Cyt_6/f_cplx_su5_sf"/>
</dbReference>
<dbReference type="Pfam" id="PF02529">
    <property type="entry name" value="PetG"/>
    <property type="match status" value="1"/>
</dbReference>
<dbReference type="PIRSF" id="PIRSF000034">
    <property type="entry name" value="Cyt_b6-f_V"/>
    <property type="match status" value="1"/>
</dbReference>
<dbReference type="SUPFAM" id="SSF103446">
    <property type="entry name" value="PetG subunit of the cytochrome b6f complex"/>
    <property type="match status" value="1"/>
</dbReference>
<gene>
    <name evidence="1" type="primary">petG</name>
</gene>
<geneLocation type="chloroplast"/>
<reference key="1">
    <citation type="journal article" date="2005" name="Gene">
        <title>The first complete chloroplast genome sequence of a lycophyte, Huperzia lucidula (Lycopodiaceae).</title>
        <authorList>
            <person name="Wolf P.G."/>
            <person name="Karol K.G."/>
            <person name="Mandoli D.F."/>
            <person name="Kuehl J.V."/>
            <person name="Arumuganathan K."/>
            <person name="Ellis M.W."/>
            <person name="Mishler B.D."/>
            <person name="Kelch D.G."/>
            <person name="Olmstead R.G."/>
            <person name="Boore J.L."/>
        </authorList>
    </citation>
    <scope>NUCLEOTIDE SEQUENCE [LARGE SCALE GENOMIC DNA]</scope>
</reference>
<keyword id="KW-0150">Chloroplast</keyword>
<keyword id="KW-0249">Electron transport</keyword>
<keyword id="KW-0472">Membrane</keyword>
<keyword id="KW-0602">Photosynthesis</keyword>
<keyword id="KW-0934">Plastid</keyword>
<keyword id="KW-0793">Thylakoid</keyword>
<keyword id="KW-0812">Transmembrane</keyword>
<keyword id="KW-1133">Transmembrane helix</keyword>
<keyword id="KW-0813">Transport</keyword>
<comment type="function">
    <text evidence="1">Component of the cytochrome b6-f complex, which mediates electron transfer between photosystem II (PSII) and photosystem I (PSI), cyclic electron flow around PSI, and state transitions. PetG is required for either the stability or assembly of the cytochrome b6-f complex.</text>
</comment>
<comment type="subunit">
    <text evidence="1">The 4 large subunits of the cytochrome b6-f complex are cytochrome b6, subunit IV (17 kDa polypeptide, PetD), cytochrome f and the Rieske protein, while the 4 small subunits are PetG, PetL, PetM and PetN. The complex functions as a dimer.</text>
</comment>
<comment type="subcellular location">
    <subcellularLocation>
        <location evidence="1">Plastid</location>
        <location evidence="1">Chloroplast thylakoid membrane</location>
        <topology evidence="1">Single-pass membrane protein</topology>
    </subcellularLocation>
</comment>
<comment type="similarity">
    <text evidence="1">Belongs to the PetG family.</text>
</comment>
<proteinExistence type="inferred from homology"/>
<protein>
    <recommendedName>
        <fullName evidence="1">Cytochrome b6-f complex subunit 5</fullName>
    </recommendedName>
    <alternativeName>
        <fullName evidence="1">Cytochrome b6-f complex subunit PetG</fullName>
    </alternativeName>
    <alternativeName>
        <fullName evidence="1">Cytochrome b6-f complex subunit V</fullName>
    </alternativeName>
</protein>
<organism>
    <name type="scientific">Huperzia lucidula</name>
    <name type="common">Shining clubmoss</name>
    <name type="synonym">Lycopodium lucidulum</name>
    <dbReference type="NCBI Taxonomy" id="37429"/>
    <lineage>
        <taxon>Eukaryota</taxon>
        <taxon>Viridiplantae</taxon>
        <taxon>Streptophyta</taxon>
        <taxon>Embryophyta</taxon>
        <taxon>Tracheophyta</taxon>
        <taxon>Lycopodiopsida</taxon>
        <taxon>Lycopodiales</taxon>
        <taxon>Lycopodiaceae</taxon>
        <taxon>Huperzioideae</taxon>
        <taxon>Huperzia</taxon>
    </lineage>
</organism>